<proteinExistence type="inferred from homology"/>
<comment type="function">
    <text evidence="1">This protein is one of the early assembly proteins of the 50S ribosomal subunit, although it is not seen to bind rRNA by itself. It is important during the early stages of 50S assembly.</text>
</comment>
<comment type="subunit">
    <text evidence="1">Part of the 50S ribosomal subunit.</text>
</comment>
<comment type="similarity">
    <text evidence="1">Belongs to the universal ribosomal protein uL13 family.</text>
</comment>
<name>RL13_CLONN</name>
<organism>
    <name type="scientific">Clostridium novyi (strain NT)</name>
    <dbReference type="NCBI Taxonomy" id="386415"/>
    <lineage>
        <taxon>Bacteria</taxon>
        <taxon>Bacillati</taxon>
        <taxon>Bacillota</taxon>
        <taxon>Clostridia</taxon>
        <taxon>Eubacteriales</taxon>
        <taxon>Clostridiaceae</taxon>
        <taxon>Clostridium</taxon>
    </lineage>
</organism>
<evidence type="ECO:0000255" key="1">
    <source>
        <dbReference type="HAMAP-Rule" id="MF_01366"/>
    </source>
</evidence>
<evidence type="ECO:0000305" key="2"/>
<protein>
    <recommendedName>
        <fullName evidence="1">Large ribosomal subunit protein uL13</fullName>
    </recommendedName>
    <alternativeName>
        <fullName evidence="2">50S ribosomal protein L13</fullName>
    </alternativeName>
</protein>
<reference key="1">
    <citation type="journal article" date="2006" name="Nat. Biotechnol.">
        <title>The genome and transcriptomes of the anti-tumor agent Clostridium novyi-NT.</title>
        <authorList>
            <person name="Bettegowda C."/>
            <person name="Huang X."/>
            <person name="Lin J."/>
            <person name="Cheong I."/>
            <person name="Kohli M."/>
            <person name="Szabo S.A."/>
            <person name="Zhang X."/>
            <person name="Diaz L.A. Jr."/>
            <person name="Velculescu V.E."/>
            <person name="Parmigiani G."/>
            <person name="Kinzler K.W."/>
            <person name="Vogelstein B."/>
            <person name="Zhou S."/>
        </authorList>
    </citation>
    <scope>NUCLEOTIDE SEQUENCE [LARGE SCALE GENOMIC DNA]</scope>
    <source>
        <strain>NT</strain>
    </source>
</reference>
<sequence length="144" mass="16540">MKSYLAKENEVQRKWYVIDVEGKPLGRAASQVATILRGKNKPTYTPNVDTGDYVIILNAEKVALTGKKLDQKMLRHHSLYPGGLKEISYKKALESKPEFVFQEAVRRMLPQGPLGRKMLKKLKVYRGSEHNQEAQKPEVLELRY</sequence>
<gene>
    <name evidence="1" type="primary">rplM</name>
    <name type="ordered locus">NT01CX_1150</name>
</gene>
<dbReference type="EMBL" id="CP000382">
    <property type="protein sequence ID" value="ABK61475.1"/>
    <property type="molecule type" value="Genomic_DNA"/>
</dbReference>
<dbReference type="RefSeq" id="WP_011721241.1">
    <property type="nucleotide sequence ID" value="NC_008593.1"/>
</dbReference>
<dbReference type="SMR" id="A0PXY1"/>
<dbReference type="STRING" id="386415.NT01CX_1150"/>
<dbReference type="KEGG" id="cno:NT01CX_1150"/>
<dbReference type="eggNOG" id="COG0102">
    <property type="taxonomic scope" value="Bacteria"/>
</dbReference>
<dbReference type="HOGENOM" id="CLU_082184_2_2_9"/>
<dbReference type="Proteomes" id="UP000008220">
    <property type="component" value="Chromosome"/>
</dbReference>
<dbReference type="GO" id="GO:0022625">
    <property type="term" value="C:cytosolic large ribosomal subunit"/>
    <property type="evidence" value="ECO:0007669"/>
    <property type="project" value="TreeGrafter"/>
</dbReference>
<dbReference type="GO" id="GO:0003729">
    <property type="term" value="F:mRNA binding"/>
    <property type="evidence" value="ECO:0007669"/>
    <property type="project" value="TreeGrafter"/>
</dbReference>
<dbReference type="GO" id="GO:0003735">
    <property type="term" value="F:structural constituent of ribosome"/>
    <property type="evidence" value="ECO:0007669"/>
    <property type="project" value="InterPro"/>
</dbReference>
<dbReference type="GO" id="GO:0017148">
    <property type="term" value="P:negative regulation of translation"/>
    <property type="evidence" value="ECO:0007669"/>
    <property type="project" value="TreeGrafter"/>
</dbReference>
<dbReference type="GO" id="GO:0006412">
    <property type="term" value="P:translation"/>
    <property type="evidence" value="ECO:0007669"/>
    <property type="project" value="UniProtKB-UniRule"/>
</dbReference>
<dbReference type="CDD" id="cd00392">
    <property type="entry name" value="Ribosomal_L13"/>
    <property type="match status" value="1"/>
</dbReference>
<dbReference type="FunFam" id="3.90.1180.10:FF:000001">
    <property type="entry name" value="50S ribosomal protein L13"/>
    <property type="match status" value="1"/>
</dbReference>
<dbReference type="Gene3D" id="3.90.1180.10">
    <property type="entry name" value="Ribosomal protein L13"/>
    <property type="match status" value="1"/>
</dbReference>
<dbReference type="HAMAP" id="MF_01366">
    <property type="entry name" value="Ribosomal_uL13"/>
    <property type="match status" value="1"/>
</dbReference>
<dbReference type="InterPro" id="IPR005822">
    <property type="entry name" value="Ribosomal_uL13"/>
</dbReference>
<dbReference type="InterPro" id="IPR005823">
    <property type="entry name" value="Ribosomal_uL13_bac-type"/>
</dbReference>
<dbReference type="InterPro" id="IPR023563">
    <property type="entry name" value="Ribosomal_uL13_CS"/>
</dbReference>
<dbReference type="InterPro" id="IPR036899">
    <property type="entry name" value="Ribosomal_uL13_sf"/>
</dbReference>
<dbReference type="NCBIfam" id="TIGR01066">
    <property type="entry name" value="rplM_bact"/>
    <property type="match status" value="1"/>
</dbReference>
<dbReference type="PANTHER" id="PTHR11545:SF2">
    <property type="entry name" value="LARGE RIBOSOMAL SUBUNIT PROTEIN UL13M"/>
    <property type="match status" value="1"/>
</dbReference>
<dbReference type="PANTHER" id="PTHR11545">
    <property type="entry name" value="RIBOSOMAL PROTEIN L13"/>
    <property type="match status" value="1"/>
</dbReference>
<dbReference type="Pfam" id="PF00572">
    <property type="entry name" value="Ribosomal_L13"/>
    <property type="match status" value="1"/>
</dbReference>
<dbReference type="PIRSF" id="PIRSF002181">
    <property type="entry name" value="Ribosomal_L13"/>
    <property type="match status" value="1"/>
</dbReference>
<dbReference type="SUPFAM" id="SSF52161">
    <property type="entry name" value="Ribosomal protein L13"/>
    <property type="match status" value="1"/>
</dbReference>
<dbReference type="PROSITE" id="PS00783">
    <property type="entry name" value="RIBOSOMAL_L13"/>
    <property type="match status" value="1"/>
</dbReference>
<keyword id="KW-1185">Reference proteome</keyword>
<keyword id="KW-0687">Ribonucleoprotein</keyword>
<keyword id="KW-0689">Ribosomal protein</keyword>
<feature type="chain" id="PRO_1000055369" description="Large ribosomal subunit protein uL13">
    <location>
        <begin position="1"/>
        <end position="144"/>
    </location>
</feature>
<accession>A0PXY1</accession>